<comment type="catalytic activity">
    <reaction evidence="1">
        <text>(2R)-3-phosphoglycerate + ATP = (2R)-3-phospho-glyceroyl phosphate + ADP</text>
        <dbReference type="Rhea" id="RHEA:14801"/>
        <dbReference type="ChEBI" id="CHEBI:30616"/>
        <dbReference type="ChEBI" id="CHEBI:57604"/>
        <dbReference type="ChEBI" id="CHEBI:58272"/>
        <dbReference type="ChEBI" id="CHEBI:456216"/>
        <dbReference type="EC" id="2.7.2.3"/>
    </reaction>
</comment>
<comment type="pathway">
    <text evidence="1">Carbohydrate degradation; glycolysis; pyruvate from D-glyceraldehyde 3-phosphate: step 2/5.</text>
</comment>
<comment type="subunit">
    <text evidence="1">Monomer.</text>
</comment>
<comment type="subcellular location">
    <subcellularLocation>
        <location evidence="1">Cytoplasm</location>
    </subcellularLocation>
</comment>
<comment type="similarity">
    <text evidence="1">Belongs to the phosphoglycerate kinase family.</text>
</comment>
<gene>
    <name evidence="1" type="primary">pgk</name>
    <name type="ordered locus">NAMH_0463</name>
</gene>
<sequence>MKINSPKDLDFKPGSSVFLRCDFNVPLDEFGNITDDRRIRMALPTIKYLLDNECKIVIASHLGRPKGEFDEKYSLKPVAKRLSHLLKQDVIMAKDVVGPDAKEKASKLQNGEILLLENVRFDPRETKNDEGFAKELSEFGEFYINDAFGVSHRAHASVEAITRFYDNEHKAAGFLLLKEINFFYKLLENPVRPFVAVVGGSKVSGKLQALINLLPKVDKIIIGGGMAFTFLKAMGYNVGNSLVEDELIDEALKIMAEAKRLGVKFYLPVDIVIADKFAEDAMVKYVTAQEIPDGWMGLDIGPASVRLFGEVLWDAQTILWNGPMGVFEMDKFSRGTFKISHEIARSHGIKVVGGGDTADAVQRAGDDEEMTFISTGGGASLELLEGKKLPGIAALEIK</sequence>
<keyword id="KW-0067">ATP-binding</keyword>
<keyword id="KW-0963">Cytoplasm</keyword>
<keyword id="KW-0324">Glycolysis</keyword>
<keyword id="KW-0418">Kinase</keyword>
<keyword id="KW-0547">Nucleotide-binding</keyword>
<keyword id="KW-0808">Transferase</keyword>
<evidence type="ECO:0000255" key="1">
    <source>
        <dbReference type="HAMAP-Rule" id="MF_00145"/>
    </source>
</evidence>
<feature type="chain" id="PRO_1000192840" description="Phosphoglycerate kinase">
    <location>
        <begin position="1"/>
        <end position="398"/>
    </location>
</feature>
<feature type="binding site" evidence="1">
    <location>
        <begin position="22"/>
        <end position="24"/>
    </location>
    <ligand>
        <name>substrate</name>
    </ligand>
</feature>
<feature type="binding site" evidence="1">
    <location>
        <position position="38"/>
    </location>
    <ligand>
        <name>substrate</name>
    </ligand>
</feature>
<feature type="binding site" evidence="1">
    <location>
        <begin position="61"/>
        <end position="64"/>
    </location>
    <ligand>
        <name>substrate</name>
    </ligand>
</feature>
<feature type="binding site" evidence="1">
    <location>
        <position position="120"/>
    </location>
    <ligand>
        <name>substrate</name>
    </ligand>
</feature>
<feature type="binding site" evidence="1">
    <location>
        <position position="153"/>
    </location>
    <ligand>
        <name>substrate</name>
    </ligand>
</feature>
<feature type="binding site" evidence="1">
    <location>
        <position position="206"/>
    </location>
    <ligand>
        <name>ATP</name>
        <dbReference type="ChEBI" id="CHEBI:30616"/>
    </ligand>
</feature>
<feature type="binding site" evidence="1">
    <location>
        <position position="297"/>
    </location>
    <ligand>
        <name>ATP</name>
        <dbReference type="ChEBI" id="CHEBI:30616"/>
    </ligand>
</feature>
<feature type="binding site" evidence="1">
    <location>
        <position position="328"/>
    </location>
    <ligand>
        <name>ATP</name>
        <dbReference type="ChEBI" id="CHEBI:30616"/>
    </ligand>
</feature>
<feature type="binding site" evidence="1">
    <location>
        <begin position="354"/>
        <end position="357"/>
    </location>
    <ligand>
        <name>ATP</name>
        <dbReference type="ChEBI" id="CHEBI:30616"/>
    </ligand>
</feature>
<protein>
    <recommendedName>
        <fullName evidence="1">Phosphoglycerate kinase</fullName>
        <ecNumber evidence="1">2.7.2.3</ecNumber>
    </recommendedName>
</protein>
<proteinExistence type="inferred from homology"/>
<reference key="1">
    <citation type="journal article" date="2009" name="PLoS Genet.">
        <title>Adaptations to submarine hydrothermal environments exemplified by the genome of Nautilia profundicola.</title>
        <authorList>
            <person name="Campbell B.J."/>
            <person name="Smith J.L."/>
            <person name="Hanson T.E."/>
            <person name="Klotz M.G."/>
            <person name="Stein L.Y."/>
            <person name="Lee C.K."/>
            <person name="Wu D."/>
            <person name="Robinson J.M."/>
            <person name="Khouri H.M."/>
            <person name="Eisen J.A."/>
            <person name="Cary S.C."/>
        </authorList>
    </citation>
    <scope>NUCLEOTIDE SEQUENCE [LARGE SCALE GENOMIC DNA]</scope>
    <source>
        <strain>ATCC BAA-1463 / DSM 18972 / AmH</strain>
    </source>
</reference>
<accession>B9L8C3</accession>
<name>PGK_NAUPA</name>
<organism>
    <name type="scientific">Nautilia profundicola (strain ATCC BAA-1463 / DSM 18972 / AmH)</name>
    <dbReference type="NCBI Taxonomy" id="598659"/>
    <lineage>
        <taxon>Bacteria</taxon>
        <taxon>Pseudomonadati</taxon>
        <taxon>Campylobacterota</taxon>
        <taxon>Epsilonproteobacteria</taxon>
        <taxon>Nautiliales</taxon>
        <taxon>Nautiliaceae</taxon>
        <taxon>Nautilia</taxon>
    </lineage>
</organism>
<dbReference type="EC" id="2.7.2.3" evidence="1"/>
<dbReference type="EMBL" id="CP001279">
    <property type="protein sequence ID" value="ACM93056.1"/>
    <property type="molecule type" value="Genomic_DNA"/>
</dbReference>
<dbReference type="RefSeq" id="WP_015902108.1">
    <property type="nucleotide sequence ID" value="NC_012115.1"/>
</dbReference>
<dbReference type="SMR" id="B9L8C3"/>
<dbReference type="STRING" id="598659.NAMH_0463"/>
<dbReference type="KEGG" id="nam:NAMH_0463"/>
<dbReference type="eggNOG" id="COG0126">
    <property type="taxonomic scope" value="Bacteria"/>
</dbReference>
<dbReference type="HOGENOM" id="CLU_025427_0_2_7"/>
<dbReference type="OrthoDB" id="9808460at2"/>
<dbReference type="UniPathway" id="UPA00109">
    <property type="reaction ID" value="UER00185"/>
</dbReference>
<dbReference type="Proteomes" id="UP000000448">
    <property type="component" value="Chromosome"/>
</dbReference>
<dbReference type="GO" id="GO:0005829">
    <property type="term" value="C:cytosol"/>
    <property type="evidence" value="ECO:0007669"/>
    <property type="project" value="TreeGrafter"/>
</dbReference>
<dbReference type="GO" id="GO:0043531">
    <property type="term" value="F:ADP binding"/>
    <property type="evidence" value="ECO:0007669"/>
    <property type="project" value="TreeGrafter"/>
</dbReference>
<dbReference type="GO" id="GO:0005524">
    <property type="term" value="F:ATP binding"/>
    <property type="evidence" value="ECO:0007669"/>
    <property type="project" value="UniProtKB-KW"/>
</dbReference>
<dbReference type="GO" id="GO:0004618">
    <property type="term" value="F:phosphoglycerate kinase activity"/>
    <property type="evidence" value="ECO:0007669"/>
    <property type="project" value="UniProtKB-UniRule"/>
</dbReference>
<dbReference type="GO" id="GO:0006094">
    <property type="term" value="P:gluconeogenesis"/>
    <property type="evidence" value="ECO:0007669"/>
    <property type="project" value="TreeGrafter"/>
</dbReference>
<dbReference type="GO" id="GO:0006096">
    <property type="term" value="P:glycolytic process"/>
    <property type="evidence" value="ECO:0007669"/>
    <property type="project" value="UniProtKB-UniRule"/>
</dbReference>
<dbReference type="CDD" id="cd00318">
    <property type="entry name" value="Phosphoglycerate_kinase"/>
    <property type="match status" value="1"/>
</dbReference>
<dbReference type="FunFam" id="3.40.50.1260:FF:000003">
    <property type="entry name" value="Phosphoglycerate kinase"/>
    <property type="match status" value="1"/>
</dbReference>
<dbReference type="FunFam" id="3.40.50.1260:FF:000006">
    <property type="entry name" value="Phosphoglycerate kinase"/>
    <property type="match status" value="1"/>
</dbReference>
<dbReference type="Gene3D" id="3.40.50.1260">
    <property type="entry name" value="Phosphoglycerate kinase, N-terminal domain"/>
    <property type="match status" value="2"/>
</dbReference>
<dbReference type="HAMAP" id="MF_00145">
    <property type="entry name" value="Phosphoglyc_kinase"/>
    <property type="match status" value="1"/>
</dbReference>
<dbReference type="InterPro" id="IPR001576">
    <property type="entry name" value="Phosphoglycerate_kinase"/>
</dbReference>
<dbReference type="InterPro" id="IPR015824">
    <property type="entry name" value="Phosphoglycerate_kinase_N"/>
</dbReference>
<dbReference type="InterPro" id="IPR036043">
    <property type="entry name" value="Phosphoglycerate_kinase_sf"/>
</dbReference>
<dbReference type="PANTHER" id="PTHR11406">
    <property type="entry name" value="PHOSPHOGLYCERATE KINASE"/>
    <property type="match status" value="1"/>
</dbReference>
<dbReference type="PANTHER" id="PTHR11406:SF23">
    <property type="entry name" value="PHOSPHOGLYCERATE KINASE 1, CHLOROPLASTIC-RELATED"/>
    <property type="match status" value="1"/>
</dbReference>
<dbReference type="Pfam" id="PF00162">
    <property type="entry name" value="PGK"/>
    <property type="match status" value="1"/>
</dbReference>
<dbReference type="PIRSF" id="PIRSF000724">
    <property type="entry name" value="Pgk"/>
    <property type="match status" value="1"/>
</dbReference>
<dbReference type="PRINTS" id="PR00477">
    <property type="entry name" value="PHGLYCKINASE"/>
</dbReference>
<dbReference type="SUPFAM" id="SSF53748">
    <property type="entry name" value="Phosphoglycerate kinase"/>
    <property type="match status" value="1"/>
</dbReference>